<reference key="1">
    <citation type="journal article" date="2009" name="Proc. Natl. Acad. Sci. U.S.A.">
        <title>Biogeography of the Sulfolobus islandicus pan-genome.</title>
        <authorList>
            <person name="Reno M.L."/>
            <person name="Held N.L."/>
            <person name="Fields C.J."/>
            <person name="Burke P.V."/>
            <person name="Whitaker R.J."/>
        </authorList>
    </citation>
    <scope>NUCLEOTIDE SEQUENCE [LARGE SCALE GENOMIC DNA]</scope>
    <source>
        <strain>Y.G.57.14 / Yellowstone #1</strain>
    </source>
</reference>
<feature type="chain" id="PRO_1000213160" description="Undecaprenyl-diphosphatase">
    <location>
        <begin position="1"/>
        <end position="265"/>
    </location>
</feature>
<feature type="transmembrane region" description="Helical" evidence="1">
    <location>
        <begin position="41"/>
        <end position="61"/>
    </location>
</feature>
<feature type="transmembrane region" description="Helical" evidence="1">
    <location>
        <begin position="75"/>
        <end position="95"/>
    </location>
</feature>
<feature type="transmembrane region" description="Helical" evidence="1">
    <location>
        <begin position="104"/>
        <end position="124"/>
    </location>
</feature>
<feature type="transmembrane region" description="Helical" evidence="1">
    <location>
        <begin position="137"/>
        <end position="157"/>
    </location>
</feature>
<feature type="transmembrane region" description="Helical" evidence="1">
    <location>
        <begin position="180"/>
        <end position="200"/>
    </location>
</feature>
<feature type="transmembrane region" description="Helical" evidence="1">
    <location>
        <begin position="215"/>
        <end position="235"/>
    </location>
</feature>
<feature type="transmembrane region" description="Helical" evidence="1">
    <location>
        <begin position="244"/>
        <end position="264"/>
    </location>
</feature>
<keyword id="KW-1003">Cell membrane</keyword>
<keyword id="KW-0378">Hydrolase</keyword>
<keyword id="KW-0472">Membrane</keyword>
<keyword id="KW-0812">Transmembrane</keyword>
<keyword id="KW-1133">Transmembrane helix</keyword>
<evidence type="ECO:0000255" key="1">
    <source>
        <dbReference type="HAMAP-Rule" id="MF_01006"/>
    </source>
</evidence>
<sequence>MNFLVSILLGIIQGISEWLPISSKTQELIASHYLLSLDVSIAYTFGLFMEMGSIGSALIYFRQDVKRVFHDKFLLKFLVVVTALTGIVGVPLYVISDKLLQNAYNPSIPMIFLGIALIADGIYIRYSRSRTREFKNLSTKEMILIGIAQGIAALPGVSRSGMTVSTMLVLGINPEDAFHYSYLAYIPAAIGSVGTTLLFTRHHISYVVSLIGIDGIALAVISALLTGLVVIGFLLKIAKTKKVYLIDFMLGGIAVLVSMLGLIIS</sequence>
<protein>
    <recommendedName>
        <fullName evidence="1">Undecaprenyl-diphosphatase</fullName>
        <ecNumber evidence="1">3.6.1.27</ecNumber>
    </recommendedName>
    <alternativeName>
        <fullName evidence="1">Undecaprenyl pyrophosphate phosphatase</fullName>
    </alternativeName>
</protein>
<dbReference type="EC" id="3.6.1.27" evidence="1"/>
<dbReference type="EMBL" id="CP001403">
    <property type="protein sequence ID" value="ACP46915.1"/>
    <property type="molecule type" value="Genomic_DNA"/>
</dbReference>
<dbReference type="RefSeq" id="WP_012716752.1">
    <property type="nucleotide sequence ID" value="NC_012622.1"/>
</dbReference>
<dbReference type="SMR" id="C3NBN0"/>
<dbReference type="GeneID" id="7806310"/>
<dbReference type="KEGG" id="siy:YG5714_2690"/>
<dbReference type="HOGENOM" id="CLU_060296_1_2_2"/>
<dbReference type="Proteomes" id="UP000002308">
    <property type="component" value="Chromosome"/>
</dbReference>
<dbReference type="GO" id="GO:0005886">
    <property type="term" value="C:plasma membrane"/>
    <property type="evidence" value="ECO:0007669"/>
    <property type="project" value="UniProtKB-SubCell"/>
</dbReference>
<dbReference type="GO" id="GO:0050380">
    <property type="term" value="F:undecaprenyl-diphosphatase activity"/>
    <property type="evidence" value="ECO:0007669"/>
    <property type="project" value="UniProtKB-UniRule"/>
</dbReference>
<dbReference type="HAMAP" id="MF_01006">
    <property type="entry name" value="Undec_diphosphatase"/>
    <property type="match status" value="1"/>
</dbReference>
<dbReference type="InterPro" id="IPR003824">
    <property type="entry name" value="UppP"/>
</dbReference>
<dbReference type="NCBIfam" id="NF001398">
    <property type="entry name" value="PRK00281.3-5"/>
    <property type="match status" value="1"/>
</dbReference>
<dbReference type="PANTHER" id="PTHR30622">
    <property type="entry name" value="UNDECAPRENYL-DIPHOSPHATASE"/>
    <property type="match status" value="1"/>
</dbReference>
<dbReference type="PANTHER" id="PTHR30622:SF2">
    <property type="entry name" value="UNDECAPRENYL-DIPHOSPHATASE"/>
    <property type="match status" value="1"/>
</dbReference>
<dbReference type="Pfam" id="PF02673">
    <property type="entry name" value="BacA"/>
    <property type="match status" value="1"/>
</dbReference>
<accession>C3NBN0</accession>
<comment type="function">
    <text evidence="1">Catalyzes the dephosphorylation of undecaprenyl diphosphate (UPP).</text>
</comment>
<comment type="catalytic activity">
    <reaction evidence="1">
        <text>di-trans,octa-cis-undecaprenyl diphosphate + H2O = di-trans,octa-cis-undecaprenyl phosphate + phosphate + H(+)</text>
        <dbReference type="Rhea" id="RHEA:28094"/>
        <dbReference type="ChEBI" id="CHEBI:15377"/>
        <dbReference type="ChEBI" id="CHEBI:15378"/>
        <dbReference type="ChEBI" id="CHEBI:43474"/>
        <dbReference type="ChEBI" id="CHEBI:58405"/>
        <dbReference type="ChEBI" id="CHEBI:60392"/>
        <dbReference type="EC" id="3.6.1.27"/>
    </reaction>
</comment>
<comment type="subcellular location">
    <subcellularLocation>
        <location evidence="1">Cell membrane</location>
        <topology evidence="1">Multi-pass membrane protein</topology>
    </subcellularLocation>
</comment>
<comment type="similarity">
    <text evidence="1">Belongs to the UppP family.</text>
</comment>
<name>UPPP_SACI7</name>
<organism>
    <name type="scientific">Saccharolobus islandicus (strain Y.G.57.14 / Yellowstone #1)</name>
    <name type="common">Sulfolobus islandicus</name>
    <dbReference type="NCBI Taxonomy" id="439386"/>
    <lineage>
        <taxon>Archaea</taxon>
        <taxon>Thermoproteota</taxon>
        <taxon>Thermoprotei</taxon>
        <taxon>Sulfolobales</taxon>
        <taxon>Sulfolobaceae</taxon>
        <taxon>Saccharolobus</taxon>
    </lineage>
</organism>
<gene>
    <name evidence="1" type="primary">uppP</name>
    <name type="ordered locus">YG5714_2690</name>
</gene>
<proteinExistence type="inferred from homology"/>